<sequence>MLNVNEYFAGKVKSIGFEGDSIGRASVGVMDAGEYTFGTGQPEEMTVITGALKVLLPGAPDWQVFTPGETFFVPGKSEFNLQVVEPTSYLCKYL</sequence>
<accession>Q6D871</accession>
<name>PPNP_PECAS</name>
<protein>
    <recommendedName>
        <fullName evidence="1">Pyrimidine/purine nucleoside phosphorylase</fullName>
        <ecNumber evidence="1">2.4.2.1</ecNumber>
        <ecNumber evidence="1">2.4.2.2</ecNumber>
    </recommendedName>
    <alternativeName>
        <fullName evidence="1">Adenosine phosphorylase</fullName>
    </alternativeName>
    <alternativeName>
        <fullName evidence="1">Cytidine phosphorylase</fullName>
    </alternativeName>
    <alternativeName>
        <fullName evidence="1">Guanosine phosphorylase</fullName>
    </alternativeName>
    <alternativeName>
        <fullName evidence="1">Inosine phosphorylase</fullName>
    </alternativeName>
    <alternativeName>
        <fullName evidence="1">Thymidine phosphorylase</fullName>
    </alternativeName>
    <alternativeName>
        <fullName evidence="1">Uridine phosphorylase</fullName>
    </alternativeName>
    <alternativeName>
        <fullName evidence="1">Xanthosine phosphorylase</fullName>
    </alternativeName>
</protein>
<comment type="function">
    <text evidence="1">Catalyzes the phosphorolysis of diverse nucleosides, yielding D-ribose 1-phosphate and the respective free bases. Can use uridine, adenosine, guanosine, cytidine, thymidine, inosine and xanthosine as substrates. Also catalyzes the reverse reactions.</text>
</comment>
<comment type="catalytic activity">
    <reaction evidence="1">
        <text>a purine D-ribonucleoside + phosphate = a purine nucleobase + alpha-D-ribose 1-phosphate</text>
        <dbReference type="Rhea" id="RHEA:19805"/>
        <dbReference type="ChEBI" id="CHEBI:26386"/>
        <dbReference type="ChEBI" id="CHEBI:43474"/>
        <dbReference type="ChEBI" id="CHEBI:57720"/>
        <dbReference type="ChEBI" id="CHEBI:142355"/>
        <dbReference type="EC" id="2.4.2.1"/>
    </reaction>
</comment>
<comment type="catalytic activity">
    <reaction evidence="1">
        <text>adenosine + phosphate = alpha-D-ribose 1-phosphate + adenine</text>
        <dbReference type="Rhea" id="RHEA:27642"/>
        <dbReference type="ChEBI" id="CHEBI:16335"/>
        <dbReference type="ChEBI" id="CHEBI:16708"/>
        <dbReference type="ChEBI" id="CHEBI:43474"/>
        <dbReference type="ChEBI" id="CHEBI:57720"/>
        <dbReference type="EC" id="2.4.2.1"/>
    </reaction>
</comment>
<comment type="catalytic activity">
    <reaction evidence="1">
        <text>cytidine + phosphate = cytosine + alpha-D-ribose 1-phosphate</text>
        <dbReference type="Rhea" id="RHEA:52540"/>
        <dbReference type="ChEBI" id="CHEBI:16040"/>
        <dbReference type="ChEBI" id="CHEBI:17562"/>
        <dbReference type="ChEBI" id="CHEBI:43474"/>
        <dbReference type="ChEBI" id="CHEBI:57720"/>
        <dbReference type="EC" id="2.4.2.2"/>
    </reaction>
</comment>
<comment type="catalytic activity">
    <reaction evidence="1">
        <text>guanosine + phosphate = alpha-D-ribose 1-phosphate + guanine</text>
        <dbReference type="Rhea" id="RHEA:13233"/>
        <dbReference type="ChEBI" id="CHEBI:16235"/>
        <dbReference type="ChEBI" id="CHEBI:16750"/>
        <dbReference type="ChEBI" id="CHEBI:43474"/>
        <dbReference type="ChEBI" id="CHEBI:57720"/>
        <dbReference type="EC" id="2.4.2.1"/>
    </reaction>
</comment>
<comment type="catalytic activity">
    <reaction evidence="1">
        <text>inosine + phosphate = alpha-D-ribose 1-phosphate + hypoxanthine</text>
        <dbReference type="Rhea" id="RHEA:27646"/>
        <dbReference type="ChEBI" id="CHEBI:17368"/>
        <dbReference type="ChEBI" id="CHEBI:17596"/>
        <dbReference type="ChEBI" id="CHEBI:43474"/>
        <dbReference type="ChEBI" id="CHEBI:57720"/>
        <dbReference type="EC" id="2.4.2.1"/>
    </reaction>
</comment>
<comment type="catalytic activity">
    <reaction evidence="1">
        <text>thymidine + phosphate = 2-deoxy-alpha-D-ribose 1-phosphate + thymine</text>
        <dbReference type="Rhea" id="RHEA:16037"/>
        <dbReference type="ChEBI" id="CHEBI:17748"/>
        <dbReference type="ChEBI" id="CHEBI:17821"/>
        <dbReference type="ChEBI" id="CHEBI:43474"/>
        <dbReference type="ChEBI" id="CHEBI:57259"/>
        <dbReference type="EC" id="2.4.2.2"/>
    </reaction>
</comment>
<comment type="catalytic activity">
    <reaction evidence="1">
        <text>uridine + phosphate = alpha-D-ribose 1-phosphate + uracil</text>
        <dbReference type="Rhea" id="RHEA:24388"/>
        <dbReference type="ChEBI" id="CHEBI:16704"/>
        <dbReference type="ChEBI" id="CHEBI:17568"/>
        <dbReference type="ChEBI" id="CHEBI:43474"/>
        <dbReference type="ChEBI" id="CHEBI:57720"/>
        <dbReference type="EC" id="2.4.2.2"/>
    </reaction>
</comment>
<comment type="catalytic activity">
    <reaction evidence="1">
        <text>xanthosine + phosphate = alpha-D-ribose 1-phosphate + xanthine</text>
        <dbReference type="Rhea" id="RHEA:27638"/>
        <dbReference type="ChEBI" id="CHEBI:17712"/>
        <dbReference type="ChEBI" id="CHEBI:18107"/>
        <dbReference type="ChEBI" id="CHEBI:43474"/>
        <dbReference type="ChEBI" id="CHEBI:57720"/>
        <dbReference type="EC" id="2.4.2.1"/>
    </reaction>
</comment>
<comment type="similarity">
    <text evidence="1">Belongs to the nucleoside phosphorylase PpnP family.</text>
</comment>
<feature type="chain" id="PRO_0000211766" description="Pyrimidine/purine nucleoside phosphorylase">
    <location>
        <begin position="1"/>
        <end position="94"/>
    </location>
</feature>
<proteinExistence type="inferred from homology"/>
<gene>
    <name evidence="1" type="primary">ppnP</name>
    <name type="ordered locus">ECA1104</name>
</gene>
<keyword id="KW-0328">Glycosyltransferase</keyword>
<keyword id="KW-1185">Reference proteome</keyword>
<keyword id="KW-0808">Transferase</keyword>
<dbReference type="EC" id="2.4.2.1" evidence="1"/>
<dbReference type="EC" id="2.4.2.2" evidence="1"/>
<dbReference type="EMBL" id="BX950851">
    <property type="protein sequence ID" value="CAG74014.1"/>
    <property type="molecule type" value="Genomic_DNA"/>
</dbReference>
<dbReference type="RefSeq" id="WP_005975968.1">
    <property type="nucleotide sequence ID" value="NC_004547.2"/>
</dbReference>
<dbReference type="SMR" id="Q6D871"/>
<dbReference type="STRING" id="218491.ECA1104"/>
<dbReference type="GeneID" id="57241283"/>
<dbReference type="KEGG" id="eca:ECA1104"/>
<dbReference type="eggNOG" id="COG3123">
    <property type="taxonomic scope" value="Bacteria"/>
</dbReference>
<dbReference type="HOGENOM" id="CLU_157874_0_0_6"/>
<dbReference type="OrthoDB" id="9793848at2"/>
<dbReference type="Proteomes" id="UP000007966">
    <property type="component" value="Chromosome"/>
</dbReference>
<dbReference type="GO" id="GO:0005829">
    <property type="term" value="C:cytosol"/>
    <property type="evidence" value="ECO:0007669"/>
    <property type="project" value="TreeGrafter"/>
</dbReference>
<dbReference type="GO" id="GO:0047975">
    <property type="term" value="F:guanosine phosphorylase activity"/>
    <property type="evidence" value="ECO:0007669"/>
    <property type="project" value="UniProtKB-EC"/>
</dbReference>
<dbReference type="GO" id="GO:0004731">
    <property type="term" value="F:purine-nucleoside phosphorylase activity"/>
    <property type="evidence" value="ECO:0007669"/>
    <property type="project" value="UniProtKB-UniRule"/>
</dbReference>
<dbReference type="GO" id="GO:0009032">
    <property type="term" value="F:thymidine phosphorylase activity"/>
    <property type="evidence" value="ECO:0007669"/>
    <property type="project" value="UniProtKB-EC"/>
</dbReference>
<dbReference type="GO" id="GO:0004850">
    <property type="term" value="F:uridine phosphorylase activity"/>
    <property type="evidence" value="ECO:0007669"/>
    <property type="project" value="UniProtKB-EC"/>
</dbReference>
<dbReference type="CDD" id="cd20296">
    <property type="entry name" value="cupin_PpnP-like"/>
    <property type="match status" value="1"/>
</dbReference>
<dbReference type="FunFam" id="2.60.120.10:FF:000016">
    <property type="entry name" value="Pyrimidine/purine nucleoside phosphorylase"/>
    <property type="match status" value="1"/>
</dbReference>
<dbReference type="Gene3D" id="2.60.120.10">
    <property type="entry name" value="Jelly Rolls"/>
    <property type="match status" value="1"/>
</dbReference>
<dbReference type="HAMAP" id="MF_01537">
    <property type="entry name" value="Nucleos_phosphorylase_PpnP"/>
    <property type="match status" value="1"/>
</dbReference>
<dbReference type="InterPro" id="IPR009664">
    <property type="entry name" value="Ppnp"/>
</dbReference>
<dbReference type="InterPro" id="IPR014710">
    <property type="entry name" value="RmlC-like_jellyroll"/>
</dbReference>
<dbReference type="InterPro" id="IPR011051">
    <property type="entry name" value="RmlC_Cupin_sf"/>
</dbReference>
<dbReference type="NCBIfam" id="NF007875">
    <property type="entry name" value="PRK10579.1"/>
    <property type="match status" value="1"/>
</dbReference>
<dbReference type="PANTHER" id="PTHR36540">
    <property type="entry name" value="PYRIMIDINE/PURINE NUCLEOSIDE PHOSPHORYLASE"/>
    <property type="match status" value="1"/>
</dbReference>
<dbReference type="PANTHER" id="PTHR36540:SF1">
    <property type="entry name" value="PYRIMIDINE_PURINE NUCLEOSIDE PHOSPHORYLASE"/>
    <property type="match status" value="1"/>
</dbReference>
<dbReference type="Pfam" id="PF06865">
    <property type="entry name" value="Ppnp"/>
    <property type="match status" value="1"/>
</dbReference>
<dbReference type="SUPFAM" id="SSF51182">
    <property type="entry name" value="RmlC-like cupins"/>
    <property type="match status" value="1"/>
</dbReference>
<organism>
    <name type="scientific">Pectobacterium atrosepticum (strain SCRI 1043 / ATCC BAA-672)</name>
    <name type="common">Erwinia carotovora subsp. atroseptica</name>
    <dbReference type="NCBI Taxonomy" id="218491"/>
    <lineage>
        <taxon>Bacteria</taxon>
        <taxon>Pseudomonadati</taxon>
        <taxon>Pseudomonadota</taxon>
        <taxon>Gammaproteobacteria</taxon>
        <taxon>Enterobacterales</taxon>
        <taxon>Pectobacteriaceae</taxon>
        <taxon>Pectobacterium</taxon>
    </lineage>
</organism>
<evidence type="ECO:0000255" key="1">
    <source>
        <dbReference type="HAMAP-Rule" id="MF_01537"/>
    </source>
</evidence>
<reference key="1">
    <citation type="journal article" date="2004" name="Proc. Natl. Acad. Sci. U.S.A.">
        <title>Genome sequence of the enterobacterial phytopathogen Erwinia carotovora subsp. atroseptica and characterization of virulence factors.</title>
        <authorList>
            <person name="Bell K.S."/>
            <person name="Sebaihia M."/>
            <person name="Pritchard L."/>
            <person name="Holden M.T.G."/>
            <person name="Hyman L.J."/>
            <person name="Holeva M.C."/>
            <person name="Thomson N.R."/>
            <person name="Bentley S.D."/>
            <person name="Churcher L.J.C."/>
            <person name="Mungall K."/>
            <person name="Atkin R."/>
            <person name="Bason N."/>
            <person name="Brooks K."/>
            <person name="Chillingworth T."/>
            <person name="Clark K."/>
            <person name="Doggett J."/>
            <person name="Fraser A."/>
            <person name="Hance Z."/>
            <person name="Hauser H."/>
            <person name="Jagels K."/>
            <person name="Moule S."/>
            <person name="Norbertczak H."/>
            <person name="Ormond D."/>
            <person name="Price C."/>
            <person name="Quail M.A."/>
            <person name="Sanders M."/>
            <person name="Walker D."/>
            <person name="Whitehead S."/>
            <person name="Salmond G.P.C."/>
            <person name="Birch P.R.J."/>
            <person name="Parkhill J."/>
            <person name="Toth I.K."/>
        </authorList>
    </citation>
    <scope>NUCLEOTIDE SEQUENCE [LARGE SCALE GENOMIC DNA]</scope>
    <source>
        <strain>SCRI 1043 / ATCC BAA-672</strain>
    </source>
</reference>